<name>RL25_EDWI9</name>
<dbReference type="EMBL" id="CP001600">
    <property type="protein sequence ID" value="ACR69777.1"/>
    <property type="molecule type" value="Genomic_DNA"/>
</dbReference>
<dbReference type="RefSeq" id="WP_015871885.1">
    <property type="nucleotide sequence ID" value="NZ_CP169062.1"/>
</dbReference>
<dbReference type="SMR" id="C5BG54"/>
<dbReference type="STRING" id="67780.B6E78_05065"/>
<dbReference type="GeneID" id="69539509"/>
<dbReference type="KEGG" id="eic:NT01EI_2608"/>
<dbReference type="PATRIC" id="fig|634503.3.peg.2322"/>
<dbReference type="HOGENOM" id="CLU_137946_0_0_6"/>
<dbReference type="OrthoDB" id="9806411at2"/>
<dbReference type="Proteomes" id="UP000001485">
    <property type="component" value="Chromosome"/>
</dbReference>
<dbReference type="GO" id="GO:0022625">
    <property type="term" value="C:cytosolic large ribosomal subunit"/>
    <property type="evidence" value="ECO:0007669"/>
    <property type="project" value="TreeGrafter"/>
</dbReference>
<dbReference type="GO" id="GO:0008097">
    <property type="term" value="F:5S rRNA binding"/>
    <property type="evidence" value="ECO:0007669"/>
    <property type="project" value="InterPro"/>
</dbReference>
<dbReference type="GO" id="GO:0003735">
    <property type="term" value="F:structural constituent of ribosome"/>
    <property type="evidence" value="ECO:0007669"/>
    <property type="project" value="InterPro"/>
</dbReference>
<dbReference type="GO" id="GO:0006412">
    <property type="term" value="P:translation"/>
    <property type="evidence" value="ECO:0007669"/>
    <property type="project" value="UniProtKB-UniRule"/>
</dbReference>
<dbReference type="CDD" id="cd00495">
    <property type="entry name" value="Ribosomal_L25_TL5_CTC"/>
    <property type="match status" value="1"/>
</dbReference>
<dbReference type="FunFam" id="2.40.240.10:FF:000002">
    <property type="entry name" value="50S ribosomal protein L25"/>
    <property type="match status" value="1"/>
</dbReference>
<dbReference type="Gene3D" id="2.40.240.10">
    <property type="entry name" value="Ribosomal Protein L25, Chain P"/>
    <property type="match status" value="1"/>
</dbReference>
<dbReference type="HAMAP" id="MF_01336">
    <property type="entry name" value="Ribosomal_bL25"/>
    <property type="match status" value="1"/>
</dbReference>
<dbReference type="InterPro" id="IPR020056">
    <property type="entry name" value="Rbsml_bL25/Gln-tRNA_synth_N"/>
</dbReference>
<dbReference type="InterPro" id="IPR011035">
    <property type="entry name" value="Ribosomal_bL25/Gln-tRNA_synth"/>
</dbReference>
<dbReference type="InterPro" id="IPR020055">
    <property type="entry name" value="Ribosomal_bL25_short"/>
</dbReference>
<dbReference type="InterPro" id="IPR029751">
    <property type="entry name" value="Ribosomal_L25_dom"/>
</dbReference>
<dbReference type="InterPro" id="IPR020930">
    <property type="entry name" value="Ribosomal_uL5_bac-type"/>
</dbReference>
<dbReference type="NCBIfam" id="NF004612">
    <property type="entry name" value="PRK05943.1"/>
    <property type="match status" value="1"/>
</dbReference>
<dbReference type="PANTHER" id="PTHR33284">
    <property type="entry name" value="RIBOSOMAL PROTEIN L25/GLN-TRNA SYNTHETASE, ANTI-CODON-BINDING DOMAIN-CONTAINING PROTEIN"/>
    <property type="match status" value="1"/>
</dbReference>
<dbReference type="PANTHER" id="PTHR33284:SF1">
    <property type="entry name" value="RIBOSOMAL PROTEIN L25_GLN-TRNA SYNTHETASE, ANTI-CODON-BINDING DOMAIN-CONTAINING PROTEIN"/>
    <property type="match status" value="1"/>
</dbReference>
<dbReference type="Pfam" id="PF01386">
    <property type="entry name" value="Ribosomal_L25p"/>
    <property type="match status" value="1"/>
</dbReference>
<dbReference type="SUPFAM" id="SSF50715">
    <property type="entry name" value="Ribosomal protein L25-like"/>
    <property type="match status" value="1"/>
</dbReference>
<sequence length="94" mass="10436">MFTINAEVRNEQGKGASRRLRTAGKFPAIVYGGSEAALSVTLDHDSTMNLSEKDGFYTDVLTLSVDGKEIKVKIQAVQRHPYKPKITHIDFVRA</sequence>
<reference key="1">
    <citation type="submission" date="2009-03" db="EMBL/GenBank/DDBJ databases">
        <title>Complete genome sequence of Edwardsiella ictaluri 93-146.</title>
        <authorList>
            <person name="Williams M.L."/>
            <person name="Gillaspy A.F."/>
            <person name="Dyer D.W."/>
            <person name="Thune R.L."/>
            <person name="Waldbieser G.C."/>
            <person name="Schuster S.C."/>
            <person name="Gipson J."/>
            <person name="Zaitshik J."/>
            <person name="Landry C."/>
            <person name="Lawrence M.L."/>
        </authorList>
    </citation>
    <scope>NUCLEOTIDE SEQUENCE [LARGE SCALE GENOMIC DNA]</scope>
    <source>
        <strain>93-146</strain>
    </source>
</reference>
<evidence type="ECO:0000255" key="1">
    <source>
        <dbReference type="HAMAP-Rule" id="MF_01336"/>
    </source>
</evidence>
<evidence type="ECO:0000305" key="2"/>
<proteinExistence type="inferred from homology"/>
<keyword id="KW-0687">Ribonucleoprotein</keyword>
<keyword id="KW-0689">Ribosomal protein</keyword>
<keyword id="KW-0694">RNA-binding</keyword>
<keyword id="KW-0699">rRNA-binding</keyword>
<comment type="function">
    <text evidence="1">This is one of the proteins that binds to the 5S RNA in the ribosome where it forms part of the central protuberance.</text>
</comment>
<comment type="subunit">
    <text evidence="1">Part of the 50S ribosomal subunit; part of the 5S rRNA/L5/L18/L25 subcomplex. Contacts the 5S rRNA. Binds to the 5S rRNA independently of L5 and L18.</text>
</comment>
<comment type="similarity">
    <text evidence="1">Belongs to the bacterial ribosomal protein bL25 family.</text>
</comment>
<organism>
    <name type="scientific">Edwardsiella ictaluri (strain 93-146)</name>
    <dbReference type="NCBI Taxonomy" id="634503"/>
    <lineage>
        <taxon>Bacteria</taxon>
        <taxon>Pseudomonadati</taxon>
        <taxon>Pseudomonadota</taxon>
        <taxon>Gammaproteobacteria</taxon>
        <taxon>Enterobacterales</taxon>
        <taxon>Hafniaceae</taxon>
        <taxon>Edwardsiella</taxon>
    </lineage>
</organism>
<gene>
    <name evidence="1" type="primary">rplY</name>
    <name type="ordered locus">NT01EI_2608</name>
</gene>
<protein>
    <recommendedName>
        <fullName evidence="1">Large ribosomal subunit protein bL25</fullName>
    </recommendedName>
    <alternativeName>
        <fullName evidence="2">50S ribosomal protein L25</fullName>
    </alternativeName>
</protein>
<feature type="chain" id="PRO_1000214661" description="Large ribosomal subunit protein bL25">
    <location>
        <begin position="1"/>
        <end position="94"/>
    </location>
</feature>
<accession>C5BG54</accession>